<proteinExistence type="inferred from homology"/>
<sequence length="401" mass="44660">MEKKKVVLAYSGGLDTSVAIKWLQEKNYDIIALCLDLGEGKDLAFVKEKALSVGAIKSYMIDVQEEFANEYALMAMQAHTLYEGKYPLVSALSRPLIAKKLVEIAEQEGATAVAHGCTGKGNDQVRFEVSIQALNPYLEVIAPVREWKWSREEEIAYAKENDVPIPINLDSPFSIDQNLWGRSNECGILEDPWAAPPEDAYEMTLALEDTPNKPEFVEIGFEAGVPTTLNGTAYSLAELIKTLNALAGKHGVGRIDHVENRLVGIKSREVYECPAAMTLITAHKELEDLTHVKEVAHFKPVIEQKITELIYNGLWFSPLKQALHAFLQETQKNVTGTVRVKLFKGHAIVEGRKSEYSLYDEKLATYTAQDEFNHDAAVGFISLFGLPTKVYSQVNQKKVEA</sequence>
<organism>
    <name type="scientific">Bacillus cereus (strain ATCC 14579 / DSM 31 / CCUG 7414 / JCM 2152 / NBRC 15305 / NCIMB 9373 / NCTC 2599 / NRRL B-3711)</name>
    <dbReference type="NCBI Taxonomy" id="226900"/>
    <lineage>
        <taxon>Bacteria</taxon>
        <taxon>Bacillati</taxon>
        <taxon>Bacillota</taxon>
        <taxon>Bacilli</taxon>
        <taxon>Bacillales</taxon>
        <taxon>Bacillaceae</taxon>
        <taxon>Bacillus</taxon>
        <taxon>Bacillus cereus group</taxon>
    </lineage>
</organism>
<dbReference type="EC" id="6.3.4.5" evidence="1"/>
<dbReference type="EMBL" id="AE016877">
    <property type="protein sequence ID" value="AAP11537.1"/>
    <property type="molecule type" value="Genomic_DNA"/>
</dbReference>
<dbReference type="RefSeq" id="NP_834336.1">
    <property type="nucleotide sequence ID" value="NC_004722.1"/>
</dbReference>
<dbReference type="RefSeq" id="WP_000412315.1">
    <property type="nucleotide sequence ID" value="NZ_CP138336.1"/>
</dbReference>
<dbReference type="SMR" id="Q817C6"/>
<dbReference type="STRING" id="226900.BC_4630"/>
<dbReference type="KEGG" id="bce:BC4630"/>
<dbReference type="PATRIC" id="fig|226900.8.peg.4793"/>
<dbReference type="HOGENOM" id="CLU_032784_4_2_9"/>
<dbReference type="OrthoDB" id="9801641at2"/>
<dbReference type="UniPathway" id="UPA00068">
    <property type="reaction ID" value="UER00113"/>
</dbReference>
<dbReference type="Proteomes" id="UP000001417">
    <property type="component" value="Chromosome"/>
</dbReference>
<dbReference type="GO" id="GO:0005737">
    <property type="term" value="C:cytoplasm"/>
    <property type="evidence" value="ECO:0000318"/>
    <property type="project" value="GO_Central"/>
</dbReference>
<dbReference type="GO" id="GO:0004055">
    <property type="term" value="F:argininosuccinate synthase activity"/>
    <property type="evidence" value="ECO:0000318"/>
    <property type="project" value="GO_Central"/>
</dbReference>
<dbReference type="GO" id="GO:0005524">
    <property type="term" value="F:ATP binding"/>
    <property type="evidence" value="ECO:0007669"/>
    <property type="project" value="UniProtKB-UniRule"/>
</dbReference>
<dbReference type="GO" id="GO:0000053">
    <property type="term" value="P:argininosuccinate metabolic process"/>
    <property type="evidence" value="ECO:0000318"/>
    <property type="project" value="GO_Central"/>
</dbReference>
<dbReference type="GO" id="GO:0006526">
    <property type="term" value="P:L-arginine biosynthetic process"/>
    <property type="evidence" value="ECO:0000318"/>
    <property type="project" value="GO_Central"/>
</dbReference>
<dbReference type="GO" id="GO:0000050">
    <property type="term" value="P:urea cycle"/>
    <property type="evidence" value="ECO:0000318"/>
    <property type="project" value="GO_Central"/>
</dbReference>
<dbReference type="CDD" id="cd01999">
    <property type="entry name" value="ASS"/>
    <property type="match status" value="1"/>
</dbReference>
<dbReference type="FunFam" id="1.20.5.470:FF:000002">
    <property type="entry name" value="Argininosuccinate synthase"/>
    <property type="match status" value="1"/>
</dbReference>
<dbReference type="FunFam" id="3.40.50.620:FF:000038">
    <property type="entry name" value="Argininosuccinate synthase"/>
    <property type="match status" value="1"/>
</dbReference>
<dbReference type="FunFam" id="3.90.1260.10:FF:000007">
    <property type="entry name" value="Argininosuccinate synthase"/>
    <property type="match status" value="1"/>
</dbReference>
<dbReference type="Gene3D" id="3.90.1260.10">
    <property type="entry name" value="Argininosuccinate synthetase, chain A, domain 2"/>
    <property type="match status" value="1"/>
</dbReference>
<dbReference type="Gene3D" id="3.40.50.620">
    <property type="entry name" value="HUPs"/>
    <property type="match status" value="1"/>
</dbReference>
<dbReference type="Gene3D" id="1.20.5.470">
    <property type="entry name" value="Single helix bin"/>
    <property type="match status" value="1"/>
</dbReference>
<dbReference type="HAMAP" id="MF_00005">
    <property type="entry name" value="Arg_succ_synth_type1"/>
    <property type="match status" value="1"/>
</dbReference>
<dbReference type="InterPro" id="IPR048268">
    <property type="entry name" value="Arginosuc_syn_C"/>
</dbReference>
<dbReference type="InterPro" id="IPR048267">
    <property type="entry name" value="Arginosuc_syn_N"/>
</dbReference>
<dbReference type="InterPro" id="IPR001518">
    <property type="entry name" value="Arginosuc_synth"/>
</dbReference>
<dbReference type="InterPro" id="IPR018223">
    <property type="entry name" value="Arginosuc_synth_CS"/>
</dbReference>
<dbReference type="InterPro" id="IPR023434">
    <property type="entry name" value="Arginosuc_synth_type_1_subfam"/>
</dbReference>
<dbReference type="InterPro" id="IPR024074">
    <property type="entry name" value="AS_cat/multimer_dom_body"/>
</dbReference>
<dbReference type="InterPro" id="IPR014729">
    <property type="entry name" value="Rossmann-like_a/b/a_fold"/>
</dbReference>
<dbReference type="NCBIfam" id="TIGR00032">
    <property type="entry name" value="argG"/>
    <property type="match status" value="1"/>
</dbReference>
<dbReference type="NCBIfam" id="NF001770">
    <property type="entry name" value="PRK00509.1"/>
    <property type="match status" value="1"/>
</dbReference>
<dbReference type="PANTHER" id="PTHR11587">
    <property type="entry name" value="ARGININOSUCCINATE SYNTHASE"/>
    <property type="match status" value="1"/>
</dbReference>
<dbReference type="PANTHER" id="PTHR11587:SF2">
    <property type="entry name" value="ARGININOSUCCINATE SYNTHASE"/>
    <property type="match status" value="1"/>
</dbReference>
<dbReference type="Pfam" id="PF20979">
    <property type="entry name" value="Arginosuc_syn_C"/>
    <property type="match status" value="1"/>
</dbReference>
<dbReference type="Pfam" id="PF00764">
    <property type="entry name" value="Arginosuc_synth"/>
    <property type="match status" value="1"/>
</dbReference>
<dbReference type="SUPFAM" id="SSF52402">
    <property type="entry name" value="Adenine nucleotide alpha hydrolases-like"/>
    <property type="match status" value="1"/>
</dbReference>
<dbReference type="SUPFAM" id="SSF69864">
    <property type="entry name" value="Argininosuccinate synthetase, C-terminal domain"/>
    <property type="match status" value="1"/>
</dbReference>
<dbReference type="PROSITE" id="PS00564">
    <property type="entry name" value="ARGININOSUCCIN_SYN_1"/>
    <property type="match status" value="1"/>
</dbReference>
<dbReference type="PROSITE" id="PS00565">
    <property type="entry name" value="ARGININOSUCCIN_SYN_2"/>
    <property type="match status" value="1"/>
</dbReference>
<reference key="1">
    <citation type="journal article" date="2003" name="Nature">
        <title>Genome sequence of Bacillus cereus and comparative analysis with Bacillus anthracis.</title>
        <authorList>
            <person name="Ivanova N."/>
            <person name="Sorokin A."/>
            <person name="Anderson I."/>
            <person name="Galleron N."/>
            <person name="Candelon B."/>
            <person name="Kapatral V."/>
            <person name="Bhattacharyya A."/>
            <person name="Reznik G."/>
            <person name="Mikhailova N."/>
            <person name="Lapidus A."/>
            <person name="Chu L."/>
            <person name="Mazur M."/>
            <person name="Goltsman E."/>
            <person name="Larsen N."/>
            <person name="D'Souza M."/>
            <person name="Walunas T."/>
            <person name="Grechkin Y."/>
            <person name="Pusch G."/>
            <person name="Haselkorn R."/>
            <person name="Fonstein M."/>
            <person name="Ehrlich S.D."/>
            <person name="Overbeek R."/>
            <person name="Kyrpides N.C."/>
        </authorList>
    </citation>
    <scope>NUCLEOTIDE SEQUENCE [LARGE SCALE GENOMIC DNA]</scope>
    <source>
        <strain>ATCC 14579 / DSM 31 / CCUG 7414 / JCM 2152 / NBRC 15305 / NCIMB 9373 / NCTC 2599 / NRRL B-3711</strain>
    </source>
</reference>
<feature type="chain" id="PRO_0000148566" description="Argininosuccinate synthase">
    <location>
        <begin position="1"/>
        <end position="401"/>
    </location>
</feature>
<feature type="binding site" evidence="1">
    <location>
        <begin position="9"/>
        <end position="17"/>
    </location>
    <ligand>
        <name>ATP</name>
        <dbReference type="ChEBI" id="CHEBI:30616"/>
    </ligand>
</feature>
<feature type="binding site" evidence="1">
    <location>
        <position position="86"/>
    </location>
    <ligand>
        <name>L-citrulline</name>
        <dbReference type="ChEBI" id="CHEBI:57743"/>
    </ligand>
</feature>
<feature type="binding site" evidence="1">
    <location>
        <position position="116"/>
    </location>
    <ligand>
        <name>ATP</name>
        <dbReference type="ChEBI" id="CHEBI:30616"/>
    </ligand>
</feature>
<feature type="binding site" evidence="1">
    <location>
        <position position="118"/>
    </location>
    <ligand>
        <name>L-aspartate</name>
        <dbReference type="ChEBI" id="CHEBI:29991"/>
    </ligand>
</feature>
<feature type="binding site" evidence="1">
    <location>
        <position position="122"/>
    </location>
    <ligand>
        <name>L-aspartate</name>
        <dbReference type="ChEBI" id="CHEBI:29991"/>
    </ligand>
</feature>
<feature type="binding site" evidence="1">
    <location>
        <position position="122"/>
    </location>
    <ligand>
        <name>L-citrulline</name>
        <dbReference type="ChEBI" id="CHEBI:57743"/>
    </ligand>
</feature>
<feature type="binding site" evidence="1">
    <location>
        <position position="123"/>
    </location>
    <ligand>
        <name>L-aspartate</name>
        <dbReference type="ChEBI" id="CHEBI:29991"/>
    </ligand>
</feature>
<feature type="binding site" evidence="1">
    <location>
        <position position="126"/>
    </location>
    <ligand>
        <name>L-citrulline</name>
        <dbReference type="ChEBI" id="CHEBI:57743"/>
    </ligand>
</feature>
<feature type="binding site" evidence="1">
    <location>
        <position position="174"/>
    </location>
    <ligand>
        <name>L-citrulline</name>
        <dbReference type="ChEBI" id="CHEBI:57743"/>
    </ligand>
</feature>
<feature type="binding site" evidence="1">
    <location>
        <position position="183"/>
    </location>
    <ligand>
        <name>L-citrulline</name>
        <dbReference type="ChEBI" id="CHEBI:57743"/>
    </ligand>
</feature>
<feature type="binding site" evidence="1">
    <location>
        <position position="259"/>
    </location>
    <ligand>
        <name>L-citrulline</name>
        <dbReference type="ChEBI" id="CHEBI:57743"/>
    </ligand>
</feature>
<feature type="binding site" evidence="1">
    <location>
        <position position="271"/>
    </location>
    <ligand>
        <name>L-citrulline</name>
        <dbReference type="ChEBI" id="CHEBI:57743"/>
    </ligand>
</feature>
<name>ASSY_BACCR</name>
<protein>
    <recommendedName>
        <fullName evidence="1">Argininosuccinate synthase</fullName>
        <ecNumber evidence="1">6.3.4.5</ecNumber>
    </recommendedName>
    <alternativeName>
        <fullName evidence="1">Citrulline--aspartate ligase</fullName>
    </alternativeName>
</protein>
<evidence type="ECO:0000255" key="1">
    <source>
        <dbReference type="HAMAP-Rule" id="MF_00005"/>
    </source>
</evidence>
<accession>Q817C6</accession>
<keyword id="KW-0028">Amino-acid biosynthesis</keyword>
<keyword id="KW-0055">Arginine biosynthesis</keyword>
<keyword id="KW-0067">ATP-binding</keyword>
<keyword id="KW-0963">Cytoplasm</keyword>
<keyword id="KW-0436">Ligase</keyword>
<keyword id="KW-0547">Nucleotide-binding</keyword>
<keyword id="KW-1185">Reference proteome</keyword>
<comment type="catalytic activity">
    <reaction evidence="1">
        <text>L-citrulline + L-aspartate + ATP = 2-(N(omega)-L-arginino)succinate + AMP + diphosphate + H(+)</text>
        <dbReference type="Rhea" id="RHEA:10932"/>
        <dbReference type="ChEBI" id="CHEBI:15378"/>
        <dbReference type="ChEBI" id="CHEBI:29991"/>
        <dbReference type="ChEBI" id="CHEBI:30616"/>
        <dbReference type="ChEBI" id="CHEBI:33019"/>
        <dbReference type="ChEBI" id="CHEBI:57472"/>
        <dbReference type="ChEBI" id="CHEBI:57743"/>
        <dbReference type="ChEBI" id="CHEBI:456215"/>
        <dbReference type="EC" id="6.3.4.5"/>
    </reaction>
</comment>
<comment type="pathway">
    <text evidence="1">Amino-acid biosynthesis; L-arginine biosynthesis; L-arginine from L-ornithine and carbamoyl phosphate: step 2/3.</text>
</comment>
<comment type="subunit">
    <text evidence="1">Homotetramer.</text>
</comment>
<comment type="subcellular location">
    <subcellularLocation>
        <location evidence="1">Cytoplasm</location>
    </subcellularLocation>
</comment>
<comment type="similarity">
    <text evidence="1">Belongs to the argininosuccinate synthase family. Type 1 subfamily.</text>
</comment>
<gene>
    <name evidence="1" type="primary">argG</name>
    <name type="ordered locus">BC_4630</name>
</gene>